<gene>
    <name evidence="16 17" type="primary">lat-1</name>
    <name type="ORF">B0457.1</name>
</gene>
<protein>
    <recommendedName>
        <fullName>Latrophilin-like protein 1</fullName>
    </recommendedName>
</protein>
<dbReference type="EMBL" id="AY314770">
    <property type="protein sequence ID" value="AAQ84877.1"/>
    <property type="molecule type" value="mRNA"/>
</dbReference>
<dbReference type="EMBL" id="AY314771">
    <property type="protein sequence ID" value="AAQ84878.1"/>
    <property type="molecule type" value="mRNA"/>
</dbReference>
<dbReference type="EMBL" id="Z54306">
    <property type="protein sequence ID" value="CAA91091.1"/>
    <property type="molecule type" value="Genomic_DNA"/>
</dbReference>
<dbReference type="EMBL" id="Z54306">
    <property type="protein sequence ID" value="CAD59141.1"/>
    <property type="molecule type" value="Genomic_DNA"/>
</dbReference>
<dbReference type="EMBL" id="Z54306">
    <property type="protein sequence ID" value="CAE54881.1"/>
    <property type="molecule type" value="Genomic_DNA"/>
</dbReference>
<dbReference type="PIR" id="T18759">
    <property type="entry name" value="T18759"/>
</dbReference>
<dbReference type="RefSeq" id="NP_001021897.1">
    <property type="nucleotide sequence ID" value="NM_001026726.3"/>
</dbReference>
<dbReference type="RefSeq" id="NP_001366731.1">
    <molecule id="G5EDW2-1"/>
    <property type="nucleotide sequence ID" value="NM_001381542.3"/>
</dbReference>
<dbReference type="RefSeq" id="NP_001367041.1">
    <molecule id="G5EDW2-2"/>
    <property type="nucleotide sequence ID" value="NM_001381541.2"/>
</dbReference>
<dbReference type="RefSeq" id="NP_001379413.1">
    <molecule id="G5EDW2-3"/>
    <property type="nucleotide sequence ID" value="NM_001393142.1"/>
</dbReference>
<dbReference type="RefSeq" id="NP_495894.1">
    <property type="nucleotide sequence ID" value="NM_063493.3"/>
</dbReference>
<dbReference type="RefSeq" id="NP_871949.1">
    <property type="nucleotide sequence ID" value="NM_182149.4"/>
</dbReference>
<dbReference type="PDB" id="8SUF">
    <property type="method" value="X-ray"/>
    <property type="resolution" value="4.00 A"/>
    <property type="chains" value="E/F/G/H=31-136"/>
</dbReference>
<dbReference type="PDBsum" id="8SUF"/>
<dbReference type="EMDB" id="EMD-40786"/>
<dbReference type="SMR" id="G5EDW2"/>
<dbReference type="BioGRID" id="39746">
    <property type="interactions" value="2"/>
</dbReference>
<dbReference type="FunCoup" id="G5EDW2">
    <property type="interactions" value="2036"/>
</dbReference>
<dbReference type="IntAct" id="G5EDW2">
    <property type="interactions" value="1"/>
</dbReference>
<dbReference type="STRING" id="6239.B0457.1a.1"/>
<dbReference type="GlyCosmos" id="G5EDW2">
    <property type="glycosylation" value="3 sites, No reported glycans"/>
</dbReference>
<dbReference type="PaxDb" id="6239-B0457.1a"/>
<dbReference type="PeptideAtlas" id="G5EDW2"/>
<dbReference type="EnsemblMetazoa" id="B0457.1a.1">
    <molecule id="G5EDW2-1"/>
    <property type="protein sequence ID" value="B0457.1a.1"/>
    <property type="gene ID" value="WBGene00002251"/>
</dbReference>
<dbReference type="EnsemblMetazoa" id="B0457.1b.1">
    <molecule id="G5EDW2-2"/>
    <property type="protein sequence ID" value="B0457.1b.1"/>
    <property type="gene ID" value="WBGene00002251"/>
</dbReference>
<dbReference type="EnsemblMetazoa" id="B0457.1c.1">
    <molecule id="G5EDW2-3"/>
    <property type="protein sequence ID" value="B0457.1c.1"/>
    <property type="gene ID" value="WBGene00002251"/>
</dbReference>
<dbReference type="GeneID" id="174419"/>
<dbReference type="UCSC" id="B0457.1a">
    <property type="organism name" value="c. elegans"/>
</dbReference>
<dbReference type="AGR" id="WB:WBGene00002251"/>
<dbReference type="WormBase" id="B0457.1a">
    <molecule id="G5EDW2-1"/>
    <property type="protein sequence ID" value="CE02945"/>
    <property type="gene ID" value="WBGene00002251"/>
    <property type="gene designation" value="lat-1"/>
</dbReference>
<dbReference type="WormBase" id="B0457.1b">
    <molecule id="G5EDW2-2"/>
    <property type="protein sequence ID" value="CE32789"/>
    <property type="gene ID" value="WBGene00002251"/>
    <property type="gene designation" value="lat-1"/>
</dbReference>
<dbReference type="WormBase" id="B0457.1c">
    <molecule id="G5EDW2-3"/>
    <property type="protein sequence ID" value="CE36086"/>
    <property type="gene ID" value="WBGene00002251"/>
    <property type="gene designation" value="lat-1"/>
</dbReference>
<dbReference type="eggNOG" id="KOG4193">
    <property type="taxonomic scope" value="Eukaryota"/>
</dbReference>
<dbReference type="eggNOG" id="KOG4729">
    <property type="taxonomic scope" value="Eukaryota"/>
</dbReference>
<dbReference type="HOGENOM" id="CLU_293252_0_0_1"/>
<dbReference type="InParanoid" id="G5EDW2"/>
<dbReference type="OMA" id="IVCRHSN"/>
<dbReference type="OrthoDB" id="1100386at2759"/>
<dbReference type="PhylomeDB" id="G5EDW2"/>
<dbReference type="PRO" id="PR:G5EDW2"/>
<dbReference type="Proteomes" id="UP000001940">
    <property type="component" value="Chromosome II"/>
</dbReference>
<dbReference type="Bgee" id="WBGene00002251">
    <property type="expression patterns" value="Expressed in pharyngeal muscle cell (C elegans) and 4 other cell types or tissues"/>
</dbReference>
<dbReference type="GO" id="GO:0005886">
    <property type="term" value="C:plasma membrane"/>
    <property type="evidence" value="ECO:0000314"/>
    <property type="project" value="WormBase"/>
</dbReference>
<dbReference type="GO" id="GO:0030246">
    <property type="term" value="F:carbohydrate binding"/>
    <property type="evidence" value="ECO:0007669"/>
    <property type="project" value="UniProtKB-KW"/>
</dbReference>
<dbReference type="GO" id="GO:0004175">
    <property type="term" value="F:endopeptidase activity"/>
    <property type="evidence" value="ECO:0000314"/>
    <property type="project" value="WormBase"/>
</dbReference>
<dbReference type="GO" id="GO:0004930">
    <property type="term" value="F:G protein-coupled receptor activity"/>
    <property type="evidence" value="ECO:0007669"/>
    <property type="project" value="UniProtKB-KW"/>
</dbReference>
<dbReference type="GO" id="GO:0004888">
    <property type="term" value="F:transmembrane signaling receptor activity"/>
    <property type="evidence" value="ECO:0000250"/>
    <property type="project" value="WormBase"/>
</dbReference>
<dbReference type="GO" id="GO:0009952">
    <property type="term" value="P:anterior/posterior pattern specification"/>
    <property type="evidence" value="ECO:0000315"/>
    <property type="project" value="WormBase"/>
</dbReference>
<dbReference type="GO" id="GO:0007166">
    <property type="term" value="P:cell surface receptor signaling pathway"/>
    <property type="evidence" value="ECO:0007669"/>
    <property type="project" value="InterPro"/>
</dbReference>
<dbReference type="GO" id="GO:0009792">
    <property type="term" value="P:embryo development ending in birth or egg hatching"/>
    <property type="evidence" value="ECO:0000315"/>
    <property type="project" value="WormBase"/>
</dbReference>
<dbReference type="GO" id="GO:0097264">
    <property type="term" value="P:self proteolysis"/>
    <property type="evidence" value="ECO:0000314"/>
    <property type="project" value="WormBase"/>
</dbReference>
<dbReference type="GO" id="GO:0019953">
    <property type="term" value="P:sexual reproduction"/>
    <property type="evidence" value="ECO:0000315"/>
    <property type="project" value="WormBase"/>
</dbReference>
<dbReference type="CDD" id="cd15440">
    <property type="entry name" value="7tmB2_latrophilin-like_invertebrate"/>
    <property type="match status" value="1"/>
</dbReference>
<dbReference type="CDD" id="cd22839">
    <property type="entry name" value="Gal_Rha_Lectin_LAT1"/>
    <property type="match status" value="1"/>
</dbReference>
<dbReference type="FunFam" id="2.60.120.740:FF:000001">
    <property type="entry name" value="Adhesion G protein-coupled receptor L2"/>
    <property type="match status" value="1"/>
</dbReference>
<dbReference type="FunFam" id="1.20.1070.10:FF:000352">
    <property type="entry name" value="Latrophilin-like protein 1"/>
    <property type="match status" value="1"/>
</dbReference>
<dbReference type="FunFam" id="2.60.220.50:FF:000050">
    <property type="entry name" value="Latrophilin-like protein 1"/>
    <property type="match status" value="1"/>
</dbReference>
<dbReference type="FunFam" id="4.10.1240.10:FF:000037">
    <property type="entry name" value="Latrophilin-like protein 1"/>
    <property type="match status" value="1"/>
</dbReference>
<dbReference type="Gene3D" id="2.60.120.740">
    <property type="match status" value="1"/>
</dbReference>
<dbReference type="Gene3D" id="2.60.220.50">
    <property type="match status" value="1"/>
</dbReference>
<dbReference type="Gene3D" id="4.10.1240.10">
    <property type="entry name" value="GPCR, family 2, extracellular hormone receptor domain"/>
    <property type="match status" value="1"/>
</dbReference>
<dbReference type="Gene3D" id="1.20.1070.10">
    <property type="entry name" value="Rhodopsin 7-helix transmembrane proteins"/>
    <property type="match status" value="1"/>
</dbReference>
<dbReference type="InterPro" id="IPR048072">
    <property type="entry name" value="7tmB2_latrophilin-like"/>
</dbReference>
<dbReference type="InterPro" id="IPR057244">
    <property type="entry name" value="GAIN_B"/>
</dbReference>
<dbReference type="InterPro" id="IPR032471">
    <property type="entry name" value="GAIN_dom_N"/>
</dbReference>
<dbReference type="InterPro" id="IPR046338">
    <property type="entry name" value="GAIN_dom_sf"/>
</dbReference>
<dbReference type="InterPro" id="IPR017981">
    <property type="entry name" value="GPCR_2-like_7TM"/>
</dbReference>
<dbReference type="InterPro" id="IPR036445">
    <property type="entry name" value="GPCR_2_extracell_dom_sf"/>
</dbReference>
<dbReference type="InterPro" id="IPR001879">
    <property type="entry name" value="GPCR_2_extracellular_dom"/>
</dbReference>
<dbReference type="InterPro" id="IPR000832">
    <property type="entry name" value="GPCR_2_secretin-like"/>
</dbReference>
<dbReference type="InterPro" id="IPR000203">
    <property type="entry name" value="GPS"/>
</dbReference>
<dbReference type="InterPro" id="IPR000922">
    <property type="entry name" value="Lectin_gal-bd_dom"/>
</dbReference>
<dbReference type="InterPro" id="IPR043159">
    <property type="entry name" value="Lectin_gal-bd_sf"/>
</dbReference>
<dbReference type="PANTHER" id="PTHR12011">
    <property type="entry name" value="ADHESION G-PROTEIN COUPLED RECEPTOR"/>
    <property type="match status" value="1"/>
</dbReference>
<dbReference type="PANTHER" id="PTHR12011:SF467">
    <property type="entry name" value="LATROPHILIN-LIKE PROTEIN 1"/>
    <property type="match status" value="1"/>
</dbReference>
<dbReference type="Pfam" id="PF00002">
    <property type="entry name" value="7tm_2"/>
    <property type="match status" value="1"/>
</dbReference>
<dbReference type="Pfam" id="PF16489">
    <property type="entry name" value="GAIN"/>
    <property type="match status" value="1"/>
</dbReference>
<dbReference type="Pfam" id="PF01825">
    <property type="entry name" value="GPS"/>
    <property type="match status" value="1"/>
</dbReference>
<dbReference type="Pfam" id="PF02793">
    <property type="entry name" value="HRM"/>
    <property type="match status" value="1"/>
</dbReference>
<dbReference type="Pfam" id="PF02140">
    <property type="entry name" value="SUEL_Lectin"/>
    <property type="match status" value="1"/>
</dbReference>
<dbReference type="PRINTS" id="PR00249">
    <property type="entry name" value="GPCRSECRETIN"/>
</dbReference>
<dbReference type="SMART" id="SM00303">
    <property type="entry name" value="GPS"/>
    <property type="match status" value="1"/>
</dbReference>
<dbReference type="SMART" id="SM00008">
    <property type="entry name" value="HormR"/>
    <property type="match status" value="1"/>
</dbReference>
<dbReference type="SUPFAM" id="SSF111418">
    <property type="entry name" value="Hormone receptor domain"/>
    <property type="match status" value="1"/>
</dbReference>
<dbReference type="PROSITE" id="PS50227">
    <property type="entry name" value="G_PROTEIN_RECEP_F2_3"/>
    <property type="match status" value="1"/>
</dbReference>
<dbReference type="PROSITE" id="PS50261">
    <property type="entry name" value="G_PROTEIN_RECEP_F2_4"/>
    <property type="match status" value="1"/>
</dbReference>
<dbReference type="PROSITE" id="PS50221">
    <property type="entry name" value="GAIN_B"/>
    <property type="match status" value="1"/>
</dbReference>
<dbReference type="PROSITE" id="PS50228">
    <property type="entry name" value="SUEL_LECTIN"/>
    <property type="match status" value="1"/>
</dbReference>
<proteinExistence type="evidence at protein level"/>
<name>LPLT1_CAEEL</name>
<accession>G5EDW2</accession>
<accession>G5EEH7</accession>
<accession>Q7JM97</accession>
<reference evidence="14 15" key="1">
    <citation type="submission" date="2003-05" db="EMBL/GenBank/DDBJ databases">
        <title>Molecular and evolutionary characterization of family B G-protein coupled receptors in Caenorhabditis elegans.</title>
        <authorList>
            <person name="Mastwal S.S."/>
            <person name="Yu D."/>
            <person name="Hedgecock E.M."/>
        </authorList>
    </citation>
    <scope>NUCLEOTIDE SEQUENCE [MRNA] (ISOFORMS A AND B)</scope>
</reference>
<reference evidence="14" key="2">
    <citation type="journal article" date="2004" name="Biochem. J.">
        <title>Latrophilin is required for toxicity of black widow spider venom in Caenorhabditis elegans.</title>
        <authorList>
            <person name="Mee C.J."/>
            <person name="Tomlinson S.R."/>
            <person name="Perestenko P.V."/>
            <person name="De Pomerai D."/>
            <person name="Duce I.R."/>
            <person name="Usherwood P.N."/>
            <person name="Bell D.R."/>
        </authorList>
    </citation>
    <scope>NUCLEOTIDE SEQUENCE [MRNA] (ISOFORM A)</scope>
    <scope>FUNCTION</scope>
    <scope>DISRUPTION PHENOTYPE</scope>
</reference>
<reference evidence="16" key="3">
    <citation type="journal article" date="1998" name="Science">
        <title>Genome sequence of the nematode C. elegans: a platform for investigating biology.</title>
        <authorList>
            <consortium name="The C. elegans sequencing consortium"/>
        </authorList>
    </citation>
    <scope>NUCLEOTIDE SEQUENCE [LARGE SCALE GENOMIC DNA]</scope>
    <scope>ALTERNATIVE SPLICING</scope>
    <source>
        <strain evidence="16">Bristol N2</strain>
    </source>
</reference>
<reference evidence="14" key="4">
    <citation type="journal article" date="2004" name="Curr. Biol.">
        <title>Latrotoxin receptor signaling engages the UNC-13-dependent vesicle-priming pathway in C. elegans.</title>
        <authorList>
            <person name="Willson J."/>
            <person name="Amliwala K."/>
            <person name="Davis A."/>
            <person name="Cook A."/>
            <person name="Cuttle M.F."/>
            <person name="Kriek N."/>
            <person name="Hopper N.A."/>
            <person name="O'Connor V."/>
            <person name="Harder A."/>
            <person name="Walker R.J."/>
            <person name="Holden-Dye L."/>
        </authorList>
    </citation>
    <scope>FUNCTION</scope>
    <scope>TISSUE SPECIFICITY</scope>
    <scope>DISRUPTION PHENOTYPE</scope>
</reference>
<reference evidence="14" key="5">
    <citation type="journal article" date="2007" name="Int. J. Parasitol.">
        <title>The calcium-activated potassium channel, SLO-1, is required for the action of the novel cyclo-octadepsipeptide anthelmintic, emodepside, in Caenorhabditis elegans.</title>
        <authorList>
            <person name="Guest M."/>
            <person name="Bull K."/>
            <person name="Walker R.J."/>
            <person name="Amliwala K."/>
            <person name="O'Connor V."/>
            <person name="Harder A."/>
            <person name="Holden-Dye L."/>
            <person name="Hopper N.A."/>
        </authorList>
    </citation>
    <scope>FUNCTION</scope>
    <scope>DISRUPTION PHENOTYPE</scope>
</reference>
<reference evidence="14" key="6">
    <citation type="journal article" date="2009" name="Dev. Cell">
        <title>Latrophilin signaling links anterior-posterior tissue polarity and oriented cell divisions in the C. elegans embryo.</title>
        <authorList>
            <person name="Langenhan T."/>
            <person name="Promel S."/>
            <person name="Mestek L."/>
            <person name="Esmaeili B."/>
            <person name="Waller-Evans H."/>
            <person name="Hennig C."/>
            <person name="Kohara Y."/>
            <person name="Avery L."/>
            <person name="Vakonakis I."/>
            <person name="Schnabel R."/>
            <person name="Russ A.P."/>
        </authorList>
    </citation>
    <scope>FUNCTION</scope>
    <scope>SUBCELLULAR LOCATION</scope>
    <scope>TISSUE SPECIFICITY</scope>
    <scope>DEVELOPMENTAL STAGE</scope>
</reference>
<reference evidence="14" key="7">
    <citation type="journal article" date="2012" name="Cell Rep.">
        <title>The GPS motif is a molecular switch for bimodal activities of adhesion class G protein-coupled receptors.</title>
        <authorList>
            <person name="Promel S."/>
            <person name="Frickenhaus M."/>
            <person name="Hughes S."/>
            <person name="Mestek L."/>
            <person name="Staunton D."/>
            <person name="Woollard A."/>
            <person name="Vakonakis I."/>
            <person name="Schoneberg T."/>
            <person name="Schnabel R."/>
            <person name="Russ A.P."/>
            <person name="Langenhan T."/>
        </authorList>
    </citation>
    <scope>FUNCTION</scope>
    <scope>SUBUNIT</scope>
    <scope>DOMAIN</scope>
    <scope>DISRUPTION PHENOTYPE</scope>
    <scope>MUTAGENESIS OF HIS-528 AND THR-530</scope>
</reference>
<organism>
    <name type="scientific">Caenorhabditis elegans</name>
    <dbReference type="NCBI Taxonomy" id="6239"/>
    <lineage>
        <taxon>Eukaryota</taxon>
        <taxon>Metazoa</taxon>
        <taxon>Ecdysozoa</taxon>
        <taxon>Nematoda</taxon>
        <taxon>Chromadorea</taxon>
        <taxon>Rhabditida</taxon>
        <taxon>Rhabditina</taxon>
        <taxon>Rhabditomorpha</taxon>
        <taxon>Rhabditoidea</taxon>
        <taxon>Rhabditidae</taxon>
        <taxon>Peloderinae</taxon>
        <taxon>Caenorhabditis</taxon>
    </lineage>
</organism>
<feature type="signal peptide" evidence="1">
    <location>
        <begin position="1"/>
        <end position="27"/>
    </location>
</feature>
<feature type="chain" id="PRO_0000421981" description="Latrophilin-like protein 1">
    <location>
        <begin position="28"/>
        <end position="1014"/>
    </location>
</feature>
<feature type="topological domain" description="Extracellular" evidence="1">
    <location>
        <begin position="28"/>
        <end position="555"/>
    </location>
</feature>
<feature type="transmembrane region" description="Helical; Name=1" evidence="1">
    <location>
        <begin position="556"/>
        <end position="576"/>
    </location>
</feature>
<feature type="topological domain" description="Cytoplasmic" evidence="1">
    <location>
        <begin position="577"/>
        <end position="584"/>
    </location>
</feature>
<feature type="transmembrane region" description="Helical; Name=2" evidence="1">
    <location>
        <begin position="585"/>
        <end position="605"/>
    </location>
</feature>
<feature type="topological domain" description="Extracellular" evidence="1">
    <location>
        <begin position="606"/>
        <end position="613"/>
    </location>
</feature>
<feature type="transmembrane region" description="Helical; Name=3" evidence="1">
    <location>
        <begin position="614"/>
        <end position="634"/>
    </location>
</feature>
<feature type="topological domain" description="Cytoplasmic" evidence="1">
    <location>
        <begin position="635"/>
        <end position="653"/>
    </location>
</feature>
<feature type="transmembrane region" description="Helical; Name=4" evidence="1">
    <location>
        <begin position="654"/>
        <end position="674"/>
    </location>
</feature>
<feature type="topological domain" description="Extracellular" evidence="1">
    <location>
        <begin position="675"/>
        <end position="692"/>
    </location>
</feature>
<feature type="transmembrane region" description="Helical; Name=5" evidence="1">
    <location>
        <begin position="693"/>
        <end position="713"/>
    </location>
</feature>
<feature type="topological domain" description="Cytoplasmic" evidence="1">
    <location>
        <begin position="714"/>
        <end position="745"/>
    </location>
</feature>
<feature type="transmembrane region" description="Helical; Name=6" evidence="1">
    <location>
        <begin position="746"/>
        <end position="766"/>
    </location>
</feature>
<feature type="topological domain" description="Extracellular" evidence="1">
    <location>
        <begin position="767"/>
        <end position="770"/>
    </location>
</feature>
<feature type="transmembrane region" description="Helical; Name=7" evidence="1">
    <location>
        <begin position="771"/>
        <end position="791"/>
    </location>
</feature>
<feature type="topological domain" description="Cytoplasmic" evidence="1">
    <location>
        <begin position="792"/>
        <end position="1014"/>
    </location>
</feature>
<feature type="domain" description="SUEL-type lectin" evidence="3">
    <location>
        <begin position="43"/>
        <end position="134"/>
    </location>
</feature>
<feature type="domain" description="GAIN-B" evidence="2">
    <location>
        <begin position="359"/>
        <end position="542"/>
    </location>
</feature>
<feature type="region of interest" description="GPS" evidence="2 8">
    <location>
        <begin position="497"/>
        <end position="542"/>
    </location>
</feature>
<feature type="region of interest" description="Disordered" evidence="4">
    <location>
        <begin position="814"/>
        <end position="833"/>
    </location>
</feature>
<feature type="region of interest" description="Disordered" evidence="4">
    <location>
        <begin position="932"/>
        <end position="994"/>
    </location>
</feature>
<feature type="compositionally biased region" description="Pro residues" evidence="4">
    <location>
        <begin position="941"/>
        <end position="952"/>
    </location>
</feature>
<feature type="compositionally biased region" description="Low complexity" evidence="4">
    <location>
        <begin position="965"/>
        <end position="986"/>
    </location>
</feature>
<feature type="site" description="Cleavage; by autolysis" evidence="2">
    <location>
        <begin position="529"/>
        <end position="530"/>
    </location>
</feature>
<feature type="glycosylation site" description="N-linked (GlcNAc...) asparagine" evidence="1">
    <location>
        <position position="4"/>
    </location>
</feature>
<feature type="glycosylation site" description="N-linked (GlcNAc...) asparagine" evidence="1">
    <location>
        <position position="473"/>
    </location>
</feature>
<feature type="glycosylation site" description="N-linked (GlcNAc...) asparagine" evidence="1">
    <location>
        <position position="518"/>
    </location>
</feature>
<feature type="disulfide bond" evidence="2">
    <location>
        <begin position="497"/>
        <end position="524"/>
    </location>
</feature>
<feature type="disulfide bond" evidence="2">
    <location>
        <begin position="512"/>
        <end position="526"/>
    </location>
</feature>
<feature type="splice variant" id="VSP_046292" description="In isoform c." evidence="12">
    <original>KCNGDSMCYFTVDKKT</original>
    <variation>NYHDDYNHNYINYYNR</variation>
    <location>
        <begin position="99"/>
        <end position="114"/>
    </location>
</feature>
<feature type="splice variant" id="VSP_046293" description="In isoform b." evidence="12 13">
    <original>DSMCYFTVDKKTFTEDPCPNTP</original>
    <variation>KQTCRFFVDTFLFDDACPMMS</variation>
    <location>
        <begin position="103"/>
        <end position="124"/>
    </location>
</feature>
<feature type="splice variant" id="VSP_046294" description="In isoform c." evidence="12">
    <location>
        <begin position="115"/>
        <end position="1014"/>
    </location>
</feature>
<feature type="splice variant" id="VSP_046295" description="In isoform b." evidence="12 13">
    <original>KYNCVVP</original>
    <variation>QHECHE</variation>
    <location>
        <begin position="130"/>
        <end position="136"/>
    </location>
</feature>
<feature type="mutagenesis site" description="Abolishes autocatalytic cleavage activity." evidence="9">
    <original>H</original>
    <variation>A</variation>
    <location>
        <position position="528"/>
    </location>
</feature>
<feature type="mutagenesis site" description="Abolishes autocatalytic cleavage activity." evidence="9">
    <original>T</original>
    <variation>A</variation>
    <location>
        <position position="530"/>
    </location>
</feature>
<evidence type="ECO:0000255" key="1"/>
<evidence type="ECO:0000255" key="2">
    <source>
        <dbReference type="PROSITE-ProRule" id="PRU00098"/>
    </source>
</evidence>
<evidence type="ECO:0000255" key="3">
    <source>
        <dbReference type="PROSITE-ProRule" id="PRU00260"/>
    </source>
</evidence>
<evidence type="ECO:0000256" key="4">
    <source>
        <dbReference type="SAM" id="MobiDB-lite"/>
    </source>
</evidence>
<evidence type="ECO:0000269" key="5">
    <source>
    </source>
</evidence>
<evidence type="ECO:0000269" key="6">
    <source>
    </source>
</evidence>
<evidence type="ECO:0000269" key="7">
    <source>
    </source>
</evidence>
<evidence type="ECO:0000269" key="8">
    <source>
    </source>
</evidence>
<evidence type="ECO:0000269" key="9">
    <source>
    </source>
</evidence>
<evidence type="ECO:0000269" key="10">
    <source>
    </source>
</evidence>
<evidence type="ECO:0000269" key="11">
    <source ref="1"/>
</evidence>
<evidence type="ECO:0000303" key="12">
    <source>
    </source>
</evidence>
<evidence type="ECO:0000303" key="13">
    <source ref="1"/>
</evidence>
<evidence type="ECO:0000305" key="14"/>
<evidence type="ECO:0000312" key="15">
    <source>
        <dbReference type="EMBL" id="AAQ84877.1"/>
    </source>
</evidence>
<evidence type="ECO:0000312" key="16">
    <source>
        <dbReference type="EMBL" id="CAA91091.1"/>
    </source>
</evidence>
<evidence type="ECO:0000312" key="17">
    <source>
        <dbReference type="WormBase" id="B0457.1a"/>
    </source>
</evidence>
<comment type="function">
    <text evidence="5 6 7 8 9">Has a role in the establishment of anterior-posterior polarity in tissues during embryogenesis. Required for the alignment of the mitotic spindles and division planes. May have a role in cell death events. Required for normal defection and oocyte fertilization. Involved in sperm function. Operates in pharyngeal pumping during feeding.</text>
</comment>
<comment type="subunit">
    <text evidence="9">Monomer and homodimer.</text>
</comment>
<comment type="subcellular location">
    <subcellularLocation>
        <location evidence="8">Cell membrane</location>
        <topology evidence="8">Multi-pass membrane protein</topology>
    </subcellularLocation>
</comment>
<comment type="alternative products">
    <event type="alternative splicing"/>
    <isoform>
        <id>G5EDW2-1</id>
        <name evidence="5 10 11">a</name>
        <sequence type="displayed"/>
    </isoform>
    <isoform>
        <id>G5EDW2-2</id>
        <name evidence="10 11">b</name>
        <sequence type="described" ref="VSP_046293 VSP_046295"/>
    </isoform>
    <isoform>
        <id>G5EDW2-3</id>
        <name evidence="10">c</name>
        <sequence type="described" ref="VSP_046292 VSP_046294"/>
    </isoform>
</comment>
<comment type="tissue specificity">
    <text evidence="6 8">Expressed in epidermal precursor cells and pharyngeal primordium. In adults expression is seen in pharyngeal muscle cells and nervous system, the nerve ring, the gonad, and the vulva.</text>
</comment>
<comment type="developmental stage">
    <text evidence="8">Expressed during oogenesis, embryogenesis, and organogenesis.</text>
</comment>
<comment type="domain">
    <text evidence="9">The GPS region of the GAIN-B domain is required for signaling.</text>
</comment>
<comment type="PTM">
    <text evidence="2">Autoproteolytically processed at the GPS region of the GAIN-B domain; this cleavage modulates receptor activity.</text>
</comment>
<comment type="disruption phenotype">
    <text evidence="5 6 7 9">Approximately 17% arrest during embryogenesis and 56% arrest at the L1 developmental stage. Defects present in seam cell positioning and division plane. Unfertilized oocytes in hermaphrodites. Five-fold less sensitive to the inhibitory effects of emodepside or imipramine on pharyngeal pumping. Irregular defecation.</text>
</comment>
<comment type="similarity">
    <text evidence="1">Belongs to the G-protein coupled receptor 2 family. LN-TM7 subfamily.</text>
</comment>
<keyword id="KW-0002">3D-structure</keyword>
<keyword id="KW-0025">Alternative splicing</keyword>
<keyword id="KW-1003">Cell membrane</keyword>
<keyword id="KW-1015">Disulfide bond</keyword>
<keyword id="KW-0297">G-protein coupled receptor</keyword>
<keyword id="KW-0325">Glycoprotein</keyword>
<keyword id="KW-0430">Lectin</keyword>
<keyword id="KW-0472">Membrane</keyword>
<keyword id="KW-0675">Receptor</keyword>
<keyword id="KW-1185">Reference proteome</keyword>
<keyword id="KW-0732">Signal</keyword>
<keyword id="KW-0807">Transducer</keyword>
<keyword id="KW-0812">Transmembrane</keyword>
<keyword id="KW-1133">Transmembrane helix</keyword>
<sequence length="1014" mass="113025">MRRNKTTYSLLQTILVACLLTVTPTFASNKPTTDESGTISHTICDGEAAELSCPAGKVISIVLGNYGRFSVAVCLPDNDIVPSNINCQNHKTKSILEKKCNGDSMCYFTVDKKTFTEDPCPNTPKYLEVKYNCVVPATTTTTTTTTSTTTTDSSLIVDEEEEAQKDALNSDVIKPVKKKEDVFCSATNRRGVNWQNTKSGTTSSAPCPEGSSGKQLWACTEEGQWLTEFPNSAGCESNWISSRNSVLSGVISSEDVSGLPEFLRNLGSETRRPMVGGDLPKVLHLLEKTVNVIAEESWAYQHLPLSNKGAVEVMNYMLRNQEIWGSWDVTKRKEFASRFILAAEKAMVASAKGMMTSAESNVIVQPAITVEISHKIKMSSQPTDYILFPSAALWNGQNVDNVNIPRDAILKINKDETQVFFSSFDNLGAQMTPSDVTVAIAGTDQTEVRKRRVVSRIVGASLIENGKERRVENLTQPVRITFYHKESSVRHLSNPTCVWWNHHELKWKPSGCKLSYHNKTMTSCDCTHLTHFAVLMDVRGHDLNEIDQTLLTLLTYVGCIISIICLLLTFFAYLIFSRNGGDRVFIHENLCLSLAIAEITFLAGITRTEDSLQCGIIAVALMYMFLSALTWMLLEGYHIHRMLTEVFPSDPRRFTYLLVGYIPPAIITLVAYLYNSDGFGTPDHCWLSTQNNFIWFFAGPACFIFCANSLVLVKTLCTVYQHTSGGYLPCRHDVDSGRSIRNWVKGSLALASLLGVTWIFGLFWVEDSRSIVMAYVFTISNSLQGLFIFLFHVVFAEKMRKDVGHWMYRRGCGGSSNSSPNHKRHNVQRDLMSPGVNSSTGSDFLYNTNDKYLTNSDTTNRLVYNGIMNHPNQMSVYQQHPHHQIYEQQPGTYDYATIAYGDMMPGHRVAAPPAYQRLAVAEGRYGSQHQLYQGWHHRPPPEFSPPPPPLSTGPPNSRHYGTGSSGRRPPSSKMSDDSAYSDGSSSMLTTEVTPQGQTVLRIDLNKPSMYCQDL</sequence>